<name>LPXC_IDILO</name>
<feature type="chain" id="PRO_0000253671" description="UDP-3-O-acyl-N-acetylglucosamine deacetylase">
    <location>
        <begin position="1"/>
        <end position="306"/>
    </location>
</feature>
<feature type="active site" description="Proton donor" evidence="1">
    <location>
        <position position="265"/>
    </location>
</feature>
<feature type="binding site" evidence="1">
    <location>
        <position position="79"/>
    </location>
    <ligand>
        <name>Zn(2+)</name>
        <dbReference type="ChEBI" id="CHEBI:29105"/>
    </ligand>
</feature>
<feature type="binding site" evidence="1">
    <location>
        <position position="238"/>
    </location>
    <ligand>
        <name>Zn(2+)</name>
        <dbReference type="ChEBI" id="CHEBI:29105"/>
    </ligand>
</feature>
<feature type="binding site" evidence="1">
    <location>
        <position position="242"/>
    </location>
    <ligand>
        <name>Zn(2+)</name>
        <dbReference type="ChEBI" id="CHEBI:29105"/>
    </ligand>
</feature>
<organism>
    <name type="scientific">Idiomarina loihiensis (strain ATCC BAA-735 / DSM 15497 / L2-TR)</name>
    <dbReference type="NCBI Taxonomy" id="283942"/>
    <lineage>
        <taxon>Bacteria</taxon>
        <taxon>Pseudomonadati</taxon>
        <taxon>Pseudomonadota</taxon>
        <taxon>Gammaproteobacteria</taxon>
        <taxon>Alteromonadales</taxon>
        <taxon>Idiomarinaceae</taxon>
        <taxon>Idiomarina</taxon>
    </lineage>
</organism>
<accession>Q5R0M7</accession>
<evidence type="ECO:0000255" key="1">
    <source>
        <dbReference type="HAMAP-Rule" id="MF_00388"/>
    </source>
</evidence>
<reference key="1">
    <citation type="journal article" date="2004" name="Proc. Natl. Acad. Sci. U.S.A.">
        <title>Genome sequence of the deep-sea gamma-proteobacterium Idiomarina loihiensis reveals amino acid fermentation as a source of carbon and energy.</title>
        <authorList>
            <person name="Hou S."/>
            <person name="Saw J.H."/>
            <person name="Lee K.S."/>
            <person name="Freitas T.A."/>
            <person name="Belisle C."/>
            <person name="Kawarabayasi Y."/>
            <person name="Donachie S.P."/>
            <person name="Pikina A."/>
            <person name="Galperin M.Y."/>
            <person name="Koonin E.V."/>
            <person name="Makarova K.S."/>
            <person name="Omelchenko M.V."/>
            <person name="Sorokin A."/>
            <person name="Wolf Y.I."/>
            <person name="Li Q.X."/>
            <person name="Keum Y.S."/>
            <person name="Campbell S."/>
            <person name="Denery J."/>
            <person name="Aizawa S."/>
            <person name="Shibata S."/>
            <person name="Malahoff A."/>
            <person name="Alam M."/>
        </authorList>
    </citation>
    <scope>NUCLEOTIDE SEQUENCE [LARGE SCALE GENOMIC DNA]</scope>
    <source>
        <strain>ATCC BAA-735 / DSM 15497 / L2-TR</strain>
    </source>
</reference>
<protein>
    <recommendedName>
        <fullName evidence="1">UDP-3-O-acyl-N-acetylglucosamine deacetylase</fullName>
        <shortName evidence="1">UDP-3-O-acyl-GlcNAc deacetylase</shortName>
        <ecNumber evidence="1">3.5.1.108</ecNumber>
    </recommendedName>
    <alternativeName>
        <fullName evidence="1">UDP-3-O-[R-3-hydroxymyristoyl]-N-acetylglucosamine deacetylase</fullName>
    </alternativeName>
</protein>
<sequence>MIKQRTLQQAISTTGVGLHKGNKVNLTLRPAPANTGLIFRRVDLDPVVDIPARADWVRDTQLCTCLINEENVRVSTVEHLLAALAGVGIDNAIIEVDSHEIPIMDGSSHPFVYLLQSAGIEEQSAAKKFIRIKQPVRVEDGDKWAELLPHDGFRIDFAIDFEHPAIADTGQTVSIDFSANAFIKEISRARTFGFMKDIEYLRENNLALGGSFDNAVVLDEFRILNSDGLRYDDEFVKHKMLDAIGDLYMGGHSILGHLRAYKSGHALNNQLLQALLAQQSAWEFVTFDEEQATAPIAFWSPATTTA</sequence>
<keyword id="KW-0378">Hydrolase</keyword>
<keyword id="KW-0441">Lipid A biosynthesis</keyword>
<keyword id="KW-0444">Lipid biosynthesis</keyword>
<keyword id="KW-0443">Lipid metabolism</keyword>
<keyword id="KW-0479">Metal-binding</keyword>
<keyword id="KW-1185">Reference proteome</keyword>
<keyword id="KW-0862">Zinc</keyword>
<gene>
    <name evidence="1" type="primary">lpxC</name>
    <name type="ordered locus">IL0442</name>
</gene>
<proteinExistence type="inferred from homology"/>
<dbReference type="EC" id="3.5.1.108" evidence="1"/>
<dbReference type="EMBL" id="AE017340">
    <property type="protein sequence ID" value="AAV81285.1"/>
    <property type="molecule type" value="Genomic_DNA"/>
</dbReference>
<dbReference type="RefSeq" id="WP_011233703.1">
    <property type="nucleotide sequence ID" value="NC_006512.1"/>
</dbReference>
<dbReference type="SMR" id="Q5R0M7"/>
<dbReference type="STRING" id="283942.IL0442"/>
<dbReference type="GeneID" id="41335594"/>
<dbReference type="KEGG" id="ilo:IL0442"/>
<dbReference type="eggNOG" id="COG0774">
    <property type="taxonomic scope" value="Bacteria"/>
</dbReference>
<dbReference type="HOGENOM" id="CLU_046528_1_0_6"/>
<dbReference type="OrthoDB" id="9802746at2"/>
<dbReference type="UniPathway" id="UPA00359">
    <property type="reaction ID" value="UER00478"/>
</dbReference>
<dbReference type="Proteomes" id="UP000001171">
    <property type="component" value="Chromosome"/>
</dbReference>
<dbReference type="GO" id="GO:0016020">
    <property type="term" value="C:membrane"/>
    <property type="evidence" value="ECO:0007669"/>
    <property type="project" value="GOC"/>
</dbReference>
<dbReference type="GO" id="GO:0046872">
    <property type="term" value="F:metal ion binding"/>
    <property type="evidence" value="ECO:0007669"/>
    <property type="project" value="UniProtKB-KW"/>
</dbReference>
<dbReference type="GO" id="GO:0103117">
    <property type="term" value="F:UDP-3-O-acyl-N-acetylglucosamine deacetylase activity"/>
    <property type="evidence" value="ECO:0007669"/>
    <property type="project" value="UniProtKB-UniRule"/>
</dbReference>
<dbReference type="GO" id="GO:0009245">
    <property type="term" value="P:lipid A biosynthetic process"/>
    <property type="evidence" value="ECO:0007669"/>
    <property type="project" value="UniProtKB-UniRule"/>
</dbReference>
<dbReference type="Gene3D" id="3.30.230.20">
    <property type="entry name" value="lpxc deacetylase, domain 1"/>
    <property type="match status" value="1"/>
</dbReference>
<dbReference type="Gene3D" id="3.30.1700.10">
    <property type="entry name" value="lpxc deacetylase, domain 2"/>
    <property type="match status" value="1"/>
</dbReference>
<dbReference type="HAMAP" id="MF_00388">
    <property type="entry name" value="LpxC"/>
    <property type="match status" value="1"/>
</dbReference>
<dbReference type="InterPro" id="IPR020568">
    <property type="entry name" value="Ribosomal_Su5_D2-typ_SF"/>
</dbReference>
<dbReference type="InterPro" id="IPR004463">
    <property type="entry name" value="UDP-acyl_GlcNac_deAcase"/>
</dbReference>
<dbReference type="InterPro" id="IPR011334">
    <property type="entry name" value="UDP-acyl_GlcNac_deAcase_C"/>
</dbReference>
<dbReference type="InterPro" id="IPR015870">
    <property type="entry name" value="UDP-acyl_N-AcGlcN_deAcase_N"/>
</dbReference>
<dbReference type="NCBIfam" id="TIGR00325">
    <property type="entry name" value="lpxC"/>
    <property type="match status" value="1"/>
</dbReference>
<dbReference type="PANTHER" id="PTHR33694">
    <property type="entry name" value="UDP-3-O-ACYL-N-ACETYLGLUCOSAMINE DEACETYLASE 1, MITOCHONDRIAL-RELATED"/>
    <property type="match status" value="1"/>
</dbReference>
<dbReference type="PANTHER" id="PTHR33694:SF1">
    <property type="entry name" value="UDP-3-O-ACYL-N-ACETYLGLUCOSAMINE DEACETYLASE 1, MITOCHONDRIAL-RELATED"/>
    <property type="match status" value="1"/>
</dbReference>
<dbReference type="Pfam" id="PF03331">
    <property type="entry name" value="LpxC"/>
    <property type="match status" value="1"/>
</dbReference>
<dbReference type="SUPFAM" id="SSF54211">
    <property type="entry name" value="Ribosomal protein S5 domain 2-like"/>
    <property type="match status" value="2"/>
</dbReference>
<comment type="function">
    <text evidence="1">Catalyzes the hydrolysis of UDP-3-O-myristoyl-N-acetylglucosamine to form UDP-3-O-myristoylglucosamine and acetate, the committed step in lipid A biosynthesis.</text>
</comment>
<comment type="catalytic activity">
    <reaction evidence="1">
        <text>a UDP-3-O-[(3R)-3-hydroxyacyl]-N-acetyl-alpha-D-glucosamine + H2O = a UDP-3-O-[(3R)-3-hydroxyacyl]-alpha-D-glucosamine + acetate</text>
        <dbReference type="Rhea" id="RHEA:67816"/>
        <dbReference type="ChEBI" id="CHEBI:15377"/>
        <dbReference type="ChEBI" id="CHEBI:30089"/>
        <dbReference type="ChEBI" id="CHEBI:137740"/>
        <dbReference type="ChEBI" id="CHEBI:173225"/>
        <dbReference type="EC" id="3.5.1.108"/>
    </reaction>
</comment>
<comment type="cofactor">
    <cofactor evidence="1">
        <name>Zn(2+)</name>
        <dbReference type="ChEBI" id="CHEBI:29105"/>
    </cofactor>
</comment>
<comment type="pathway">
    <text evidence="1">Glycolipid biosynthesis; lipid IV(A) biosynthesis; lipid IV(A) from (3R)-3-hydroxytetradecanoyl-[acyl-carrier-protein] and UDP-N-acetyl-alpha-D-glucosamine: step 2/6.</text>
</comment>
<comment type="similarity">
    <text evidence="1">Belongs to the LpxC family.</text>
</comment>